<evidence type="ECO:0000250" key="1">
    <source>
        <dbReference type="UniProtKB" id="P0A951"/>
    </source>
</evidence>
<evidence type="ECO:0000250" key="2">
    <source>
        <dbReference type="UniProtKB" id="P21673"/>
    </source>
</evidence>
<evidence type="ECO:0000255" key="3">
    <source>
        <dbReference type="PROSITE-ProRule" id="PRU00532"/>
    </source>
</evidence>
<evidence type="ECO:0000269" key="4">
    <source>
    </source>
</evidence>
<evidence type="ECO:0000269" key="5">
    <source>
    </source>
</evidence>
<evidence type="ECO:0000269" key="6">
    <source>
    </source>
</evidence>
<evidence type="ECO:0000303" key="7">
    <source>
    </source>
</evidence>
<evidence type="ECO:0000303" key="8">
    <source>
    </source>
</evidence>
<evidence type="ECO:0000305" key="9"/>
<evidence type="ECO:0000305" key="10">
    <source>
    </source>
</evidence>
<evidence type="ECO:0000312" key="11">
    <source>
        <dbReference type="HGNC" id="HGNC:23160"/>
    </source>
</evidence>
<evidence type="ECO:0007744" key="12">
    <source>
    </source>
</evidence>
<evidence type="ECO:0007829" key="13">
    <source>
        <dbReference type="PDB" id="2BEI"/>
    </source>
</evidence>
<proteinExistence type="evidence at protein level"/>
<protein>
    <recommendedName>
        <fullName evidence="8">Thialysine N-epsilon-acetyltransferase</fullName>
        <ecNumber evidence="5">2.3.1.-</ecNumber>
    </recommendedName>
    <alternativeName>
        <fullName evidence="9">Diamine acetyltransferase 2</fullName>
        <ecNumber evidence="10">2.3.1.57</ecNumber>
    </alternativeName>
    <alternativeName>
        <fullName evidence="7">Spermidine/spermine N(1)-acetyltransferase 2</fullName>
        <shortName evidence="7">SSAT-2</shortName>
    </alternativeName>
</protein>
<organism>
    <name type="scientific">Homo sapiens</name>
    <name type="common">Human</name>
    <dbReference type="NCBI Taxonomy" id="9606"/>
    <lineage>
        <taxon>Eukaryota</taxon>
        <taxon>Metazoa</taxon>
        <taxon>Chordata</taxon>
        <taxon>Craniata</taxon>
        <taxon>Vertebrata</taxon>
        <taxon>Euteleostomi</taxon>
        <taxon>Mammalia</taxon>
        <taxon>Eutheria</taxon>
        <taxon>Euarchontoglires</taxon>
        <taxon>Primates</taxon>
        <taxon>Haplorrhini</taxon>
        <taxon>Catarrhini</taxon>
        <taxon>Hominidae</taxon>
        <taxon>Homo</taxon>
    </lineage>
</organism>
<dbReference type="EC" id="2.3.1.-" evidence="5"/>
<dbReference type="EC" id="2.3.1.57" evidence="10"/>
<dbReference type="EMBL" id="AF348524">
    <property type="protein sequence ID" value="AAL83905.1"/>
    <property type="molecule type" value="mRNA"/>
</dbReference>
<dbReference type="EMBL" id="BC011751">
    <property type="protein sequence ID" value="AAH11751.1"/>
    <property type="molecule type" value="mRNA"/>
</dbReference>
<dbReference type="CCDS" id="CCDS11116.1"/>
<dbReference type="RefSeq" id="NP_001307775.1">
    <property type="nucleotide sequence ID" value="NM_001320846.1"/>
</dbReference>
<dbReference type="RefSeq" id="NP_001307776.1">
    <property type="nucleotide sequence ID" value="NM_001320847.1"/>
</dbReference>
<dbReference type="RefSeq" id="NP_597998.1">
    <property type="nucleotide sequence ID" value="NM_133491.5"/>
</dbReference>
<dbReference type="PDB" id="2BEI">
    <property type="method" value="X-ray"/>
    <property type="resolution" value="1.84 A"/>
    <property type="chains" value="A/B=2-170"/>
</dbReference>
<dbReference type="PDB" id="2Q4V">
    <property type="method" value="X-ray"/>
    <property type="resolution" value="1.84 A"/>
    <property type="chains" value="A/B=2-170"/>
</dbReference>
<dbReference type="PDBsum" id="2BEI"/>
<dbReference type="PDBsum" id="2Q4V"/>
<dbReference type="SMR" id="Q96F10"/>
<dbReference type="BioGRID" id="125190">
    <property type="interactions" value="16"/>
</dbReference>
<dbReference type="FunCoup" id="Q96F10">
    <property type="interactions" value="125"/>
</dbReference>
<dbReference type="IntAct" id="Q96F10">
    <property type="interactions" value="12"/>
</dbReference>
<dbReference type="MINT" id="Q96F10"/>
<dbReference type="STRING" id="9606.ENSP00000269298"/>
<dbReference type="ChEMBL" id="CHEMBL3509592"/>
<dbReference type="DrugBank" id="DB00127">
    <property type="generic name" value="Spermine"/>
</dbReference>
<dbReference type="iPTMnet" id="Q96F10"/>
<dbReference type="PhosphoSitePlus" id="Q96F10"/>
<dbReference type="BioMuta" id="SAT2"/>
<dbReference type="DMDM" id="51339204"/>
<dbReference type="jPOST" id="Q96F10"/>
<dbReference type="MassIVE" id="Q96F10"/>
<dbReference type="PaxDb" id="9606-ENSP00000269298"/>
<dbReference type="PeptideAtlas" id="Q96F10"/>
<dbReference type="ProteomicsDB" id="76483"/>
<dbReference type="Pumba" id="Q96F10"/>
<dbReference type="Antibodypedia" id="12120">
    <property type="antibodies" value="156 antibodies from 22 providers"/>
</dbReference>
<dbReference type="DNASU" id="112483"/>
<dbReference type="Ensembl" id="ENST00000269298.10">
    <property type="protein sequence ID" value="ENSP00000269298.5"/>
    <property type="gene ID" value="ENSG00000141504.12"/>
</dbReference>
<dbReference type="GeneID" id="112483"/>
<dbReference type="KEGG" id="hsa:112483"/>
<dbReference type="MANE-Select" id="ENST00000269298.10">
    <property type="protein sequence ID" value="ENSP00000269298.5"/>
    <property type="RefSeq nucleotide sequence ID" value="NM_133491.5"/>
    <property type="RefSeq protein sequence ID" value="NP_597998.1"/>
</dbReference>
<dbReference type="UCSC" id="uc002gic.3">
    <property type="organism name" value="human"/>
</dbReference>
<dbReference type="AGR" id="HGNC:23160"/>
<dbReference type="CTD" id="112483"/>
<dbReference type="DisGeNET" id="112483"/>
<dbReference type="GeneCards" id="SAT2"/>
<dbReference type="HGNC" id="HGNC:23160">
    <property type="gene designation" value="SAT2"/>
</dbReference>
<dbReference type="HPA" id="ENSG00000141504">
    <property type="expression patterns" value="Low tissue specificity"/>
</dbReference>
<dbReference type="MIM" id="611463">
    <property type="type" value="gene"/>
</dbReference>
<dbReference type="neXtProt" id="NX_Q96F10"/>
<dbReference type="OpenTargets" id="ENSG00000141504"/>
<dbReference type="PharmGKB" id="PA134979941"/>
<dbReference type="VEuPathDB" id="HostDB:ENSG00000141504"/>
<dbReference type="eggNOG" id="KOG3216">
    <property type="taxonomic scope" value="Eukaryota"/>
</dbReference>
<dbReference type="GeneTree" id="ENSGT00950000183121"/>
<dbReference type="HOGENOM" id="CLU_013985_41_1_1"/>
<dbReference type="InParanoid" id="Q96F10"/>
<dbReference type="OMA" id="QSEWVRY"/>
<dbReference type="OrthoDB" id="7305308at2759"/>
<dbReference type="PAN-GO" id="Q96F10">
    <property type="GO annotations" value="3 GO annotations based on evolutionary models"/>
</dbReference>
<dbReference type="PhylomeDB" id="Q96F10"/>
<dbReference type="TreeFam" id="TF319736"/>
<dbReference type="BRENDA" id="2.3.1.57">
    <property type="organism ID" value="2681"/>
</dbReference>
<dbReference type="PathwayCommons" id="Q96F10"/>
<dbReference type="SignaLink" id="Q96F10"/>
<dbReference type="BioGRID-ORCS" id="112483">
    <property type="hits" value="25 hits in 1147 CRISPR screens"/>
</dbReference>
<dbReference type="ChiTaRS" id="SAT2">
    <property type="organism name" value="human"/>
</dbReference>
<dbReference type="EvolutionaryTrace" id="Q96F10"/>
<dbReference type="GeneWiki" id="SAT2"/>
<dbReference type="GenomeRNAi" id="112483"/>
<dbReference type="Pharos" id="Q96F10">
    <property type="development level" value="Tbio"/>
</dbReference>
<dbReference type="PRO" id="PR:Q96F10"/>
<dbReference type="Proteomes" id="UP000005640">
    <property type="component" value="Chromosome 17"/>
</dbReference>
<dbReference type="RNAct" id="Q96F10">
    <property type="molecule type" value="protein"/>
</dbReference>
<dbReference type="Bgee" id="ENSG00000141504">
    <property type="expression patterns" value="Expressed in kidney epithelium and 181 other cell types or tissues"/>
</dbReference>
<dbReference type="ExpressionAtlas" id="Q96F10">
    <property type="expression patterns" value="baseline and differential"/>
</dbReference>
<dbReference type="GO" id="GO:0005737">
    <property type="term" value="C:cytoplasm"/>
    <property type="evidence" value="ECO:0007669"/>
    <property type="project" value="UniProtKB-SubCell"/>
</dbReference>
<dbReference type="GO" id="GO:0070062">
    <property type="term" value="C:extracellular exosome"/>
    <property type="evidence" value="ECO:0007005"/>
    <property type="project" value="UniProtKB"/>
</dbReference>
<dbReference type="GO" id="GO:0004145">
    <property type="term" value="F:diamine N-acetyltransferase activity"/>
    <property type="evidence" value="ECO:0000314"/>
    <property type="project" value="UniProtKB"/>
</dbReference>
<dbReference type="GO" id="GO:0042802">
    <property type="term" value="F:identical protein binding"/>
    <property type="evidence" value="ECO:0000353"/>
    <property type="project" value="IntAct"/>
</dbReference>
<dbReference type="GO" id="GO:0008080">
    <property type="term" value="F:N-acetyltransferase activity"/>
    <property type="evidence" value="ECO:0000314"/>
    <property type="project" value="UniProtKB"/>
</dbReference>
<dbReference type="GO" id="GO:0046204">
    <property type="term" value="P:nor-spermidine metabolic process"/>
    <property type="evidence" value="ECO:0000314"/>
    <property type="project" value="UniProtKB"/>
</dbReference>
<dbReference type="GO" id="GO:0032920">
    <property type="term" value="P:putrescine acetylation"/>
    <property type="evidence" value="ECO:0000314"/>
    <property type="project" value="UniProtKB"/>
</dbReference>
<dbReference type="GO" id="GO:0032918">
    <property type="term" value="P:spermidine acetylation"/>
    <property type="evidence" value="ECO:0000314"/>
    <property type="project" value="UniProtKB"/>
</dbReference>
<dbReference type="GO" id="GO:0032919">
    <property type="term" value="P:spermine acetylation"/>
    <property type="evidence" value="ECO:0000314"/>
    <property type="project" value="UniProtKB"/>
</dbReference>
<dbReference type="CDD" id="cd04301">
    <property type="entry name" value="NAT_SF"/>
    <property type="match status" value="1"/>
</dbReference>
<dbReference type="FunFam" id="3.40.630.30:FF:000011">
    <property type="entry name" value="Diamine acetyltransferase 1"/>
    <property type="match status" value="1"/>
</dbReference>
<dbReference type="Gene3D" id="3.40.630.30">
    <property type="match status" value="1"/>
</dbReference>
<dbReference type="InterPro" id="IPR016181">
    <property type="entry name" value="Acyl_CoA_acyltransferase"/>
</dbReference>
<dbReference type="InterPro" id="IPR051016">
    <property type="entry name" value="Diverse_Substrate_AcTransf"/>
</dbReference>
<dbReference type="InterPro" id="IPR000182">
    <property type="entry name" value="GNAT_dom"/>
</dbReference>
<dbReference type="PANTHER" id="PTHR10545">
    <property type="entry name" value="DIAMINE N-ACETYLTRANSFERASE"/>
    <property type="match status" value="1"/>
</dbReference>
<dbReference type="PANTHER" id="PTHR10545:SF51">
    <property type="entry name" value="THIALYSINE N-EPSILON-ACETYLTRANSFERASE"/>
    <property type="match status" value="1"/>
</dbReference>
<dbReference type="Pfam" id="PF00583">
    <property type="entry name" value="Acetyltransf_1"/>
    <property type="match status" value="1"/>
</dbReference>
<dbReference type="SUPFAM" id="SSF55729">
    <property type="entry name" value="Acyl-CoA N-acyltransferases (Nat)"/>
    <property type="match status" value="1"/>
</dbReference>
<dbReference type="PROSITE" id="PS51186">
    <property type="entry name" value="GNAT"/>
    <property type="match status" value="1"/>
</dbReference>
<gene>
    <name evidence="11" type="primary">SAT2</name>
    <name evidence="7" type="synonym">SSAT2</name>
</gene>
<name>SAT2_HUMAN</name>
<comment type="function">
    <text evidence="4 5">Catalyzes the N-acetylation of the amino acid thialysine (S-(2-aminoethyl)-L-cysteine), a L-lysine analog with the 4-methylene group substituted with a sulfur (PubMed:15283699). May also catalyze acetylation of polyamines, such as norspermidine, spermidine or spermine (PubMed:12803540). However, ability to acetylate polyamines is weak, suggesting that it does not act as a diamine acetyltransferase in vivo (PubMed:15283699).</text>
</comment>
<comment type="catalytic activity">
    <reaction evidence="5">
        <text>S-(2-aminoethyl)-L-cysteine + acetyl-CoA = S-(2-acetamidoethyl)-L-cysteine + CoA + H(+)</text>
        <dbReference type="Rhea" id="RHEA:64804"/>
        <dbReference type="ChEBI" id="CHEBI:15378"/>
        <dbReference type="ChEBI" id="CHEBI:57287"/>
        <dbReference type="ChEBI" id="CHEBI:57288"/>
        <dbReference type="ChEBI" id="CHEBI:156132"/>
        <dbReference type="ChEBI" id="CHEBI:156134"/>
    </reaction>
    <physiologicalReaction direction="left-to-right" evidence="5">
        <dbReference type="Rhea" id="RHEA:64805"/>
    </physiologicalReaction>
</comment>
<comment type="catalytic activity">
    <reaction evidence="10">
        <text>an alkane-alpha,omega-diamine + acetyl-CoA = an N-acetylalkane-alpha,omega-diamine + CoA + H(+)</text>
        <dbReference type="Rhea" id="RHEA:11116"/>
        <dbReference type="Rhea" id="RHEA-COMP:9766"/>
        <dbReference type="Rhea" id="RHEA-COMP:9767"/>
        <dbReference type="ChEBI" id="CHEBI:15378"/>
        <dbReference type="ChEBI" id="CHEBI:57287"/>
        <dbReference type="ChEBI" id="CHEBI:57288"/>
        <dbReference type="ChEBI" id="CHEBI:70977"/>
        <dbReference type="ChEBI" id="CHEBI:70988"/>
        <dbReference type="EC" id="2.3.1.57"/>
    </reaction>
</comment>
<comment type="biophysicochemical properties">
    <kinetics>
        <KM evidence="5">8.2 mM for putrescine</KM>
        <KM evidence="5">13.4 mM for spermidine</KM>
        <KM evidence="5">4.8 mM for spermine</KM>
        <KM evidence="5">1.6 mM for 1,3-diaminopropane</KM>
        <KM evidence="5">6 mM for norspermidine</KM>
        <KM evidence="5">0.29 mM for thialysine</KM>
        <text evidence="5">kcat is 0.0023 sec(-1) with putrescine as substrate (PubMed:15283699). kcat is 0.0072 sec(-1) with spermidine as substrate (PubMed:15283699). kcat is 0.0020 sec(-1) with spermine as substrate (PubMed:15283699). kcat is 0.0137 sec(-1) with 1,3-diaminopropane as substrate (PubMed:15283699). kcat is 5.25 sec(-1) with thialysine as substrate (PubMed:15283699).</text>
    </kinetics>
</comment>
<comment type="subunit">
    <text evidence="6">Homodimer.</text>
</comment>
<comment type="interaction">
    <interactant intactId="EBI-748746">
        <id>Q96F10</id>
    </interactant>
    <interactant intactId="EBI-711613">
        <id>P21673</id>
        <label>SAT1</label>
    </interactant>
    <organismsDiffer>false</organismsDiffer>
    <experiments>6</experiments>
</comment>
<comment type="interaction">
    <interactant intactId="EBI-748746">
        <id>Q96F10</id>
    </interactant>
    <interactant intactId="EBI-748746">
        <id>Q96F10</id>
        <label>SAT2</label>
    </interactant>
    <organismsDiffer>false</organismsDiffer>
    <experiments>5</experiments>
</comment>
<comment type="subcellular location">
    <subcellularLocation>
        <location evidence="10">Cytoplasm</location>
    </subcellularLocation>
    <text evidence="10">Intracellular organelles.</text>
</comment>
<comment type="tissue specificity">
    <text evidence="4 5">Widely expressed (PubMed:12803540, PubMed:15283699). Under physiological conditions, SSAT2 is expressed at lower level that SSAT1 (SSAT). Many tissues express only SSAT1, several tissues express both SSAT1 and SSAT2, and bone, cervix, ovary and pineal gland expressed only SSAT2 (PubMed:12803540).</text>
</comment>
<comment type="induction">
    <text evidence="4">Not inducible by polyamine analogs.</text>
</comment>
<comment type="similarity">
    <text evidence="9">Belongs to the acetyltransferase family.</text>
</comment>
<comment type="caution">
    <text evidence="4 5">Diamine acetyltransferase activity is unclear (PubMed:12803540, PubMed:15283699). According to a report, mediates acetylation of polyamines, such as norspermidine, spermidine or spermine (PubMed:12803540). However, another publication showed that such activity is weak compared to thialysine acetyltransferase activity, suggesting that polyamines are not substrates in vivo (PubMed:15283699).</text>
</comment>
<feature type="chain" id="PRO_0000074598" description="Thialysine N-epsilon-acetyltransferase">
    <location>
        <begin position="1"/>
        <end position="170"/>
    </location>
</feature>
<feature type="domain" description="N-acetyltransferase" evidence="3">
    <location>
        <begin position="4"/>
        <end position="168"/>
    </location>
</feature>
<feature type="active site" description="Proton donor" evidence="1">
    <location>
        <position position="140"/>
    </location>
</feature>
<feature type="binding site" evidence="2">
    <location>
        <begin position="27"/>
        <end position="28"/>
    </location>
    <ligand>
        <name>substrate</name>
    </ligand>
</feature>
<feature type="binding site" evidence="2">
    <location>
        <position position="92"/>
    </location>
    <ligand>
        <name>substrate</name>
    </ligand>
</feature>
<feature type="binding site" evidence="6">
    <location>
        <begin position="94"/>
        <end position="96"/>
    </location>
    <ligand>
        <name>acetyl-CoA</name>
        <dbReference type="ChEBI" id="CHEBI:57288"/>
    </ligand>
</feature>
<feature type="binding site" evidence="6">
    <location>
        <begin position="102"/>
        <end position="107"/>
    </location>
    <ligand>
        <name>acetyl-CoA</name>
        <dbReference type="ChEBI" id="CHEBI:57288"/>
    </ligand>
</feature>
<feature type="binding site" evidence="6">
    <location>
        <begin position="133"/>
        <end position="135"/>
    </location>
    <ligand>
        <name>acetyl-CoA</name>
        <dbReference type="ChEBI" id="CHEBI:57288"/>
    </ligand>
</feature>
<feature type="binding site" evidence="6">
    <location>
        <position position="140"/>
    </location>
    <ligand>
        <name>acetyl-CoA</name>
        <dbReference type="ChEBI" id="CHEBI:57288"/>
    </ligand>
</feature>
<feature type="binding site" evidence="2">
    <location>
        <position position="152"/>
    </location>
    <ligand>
        <name>substrate</name>
    </ligand>
</feature>
<feature type="modified residue" description="N6-acetyllysine" evidence="12">
    <location>
        <position position="29"/>
    </location>
</feature>
<feature type="sequence variant" id="VAR_020465" description="In dbSNP:rs13894.">
    <original>R</original>
    <variation>C</variation>
    <location>
        <position position="126"/>
    </location>
</feature>
<feature type="strand" evidence="13">
    <location>
        <begin position="4"/>
        <end position="8"/>
    </location>
</feature>
<feature type="helix" evidence="13">
    <location>
        <begin position="11"/>
        <end position="13"/>
    </location>
</feature>
<feature type="helix" evidence="13">
    <location>
        <begin position="14"/>
        <end position="28"/>
    </location>
</feature>
<feature type="helix" evidence="13">
    <location>
        <begin position="31"/>
        <end position="33"/>
    </location>
</feature>
<feature type="helix" evidence="13">
    <location>
        <begin position="38"/>
        <end position="46"/>
    </location>
</feature>
<feature type="strand" evidence="13">
    <location>
        <begin position="47"/>
        <end position="49"/>
    </location>
</feature>
<feature type="strand" evidence="13">
    <location>
        <begin position="53"/>
        <end position="59"/>
    </location>
</feature>
<feature type="strand" evidence="13">
    <location>
        <begin position="70"/>
        <end position="82"/>
    </location>
</feature>
<feature type="turn" evidence="13">
    <location>
        <begin position="83"/>
        <end position="85"/>
    </location>
</feature>
<feature type="strand" evidence="13">
    <location>
        <begin position="86"/>
        <end position="96"/>
    </location>
</feature>
<feature type="helix" evidence="13">
    <location>
        <begin position="98"/>
        <end position="100"/>
    </location>
</feature>
<feature type="strand" evidence="13">
    <location>
        <begin position="102"/>
        <end position="104"/>
    </location>
</feature>
<feature type="helix" evidence="13">
    <location>
        <begin position="105"/>
        <end position="119"/>
    </location>
</feature>
<feature type="strand" evidence="13">
    <location>
        <begin position="124"/>
        <end position="130"/>
    </location>
</feature>
<feature type="helix" evidence="13">
    <location>
        <begin position="134"/>
        <end position="142"/>
    </location>
</feature>
<feature type="helix" evidence="13">
    <location>
        <begin position="148"/>
        <end position="152"/>
    </location>
</feature>
<feature type="strand" evidence="13">
    <location>
        <begin position="154"/>
        <end position="160"/>
    </location>
</feature>
<feature type="helix" evidence="13">
    <location>
        <begin position="162"/>
        <end position="167"/>
    </location>
</feature>
<reference key="1">
    <citation type="journal article" date="2004" name="Biochem. J.">
        <title>Spermidine/spermine-N1-acetyltransferase-2 (SSAT2) acetylates thialysine and is not involved in polyamine metabolism.</title>
        <authorList>
            <person name="Coleman C.S."/>
            <person name="Stanley B.A."/>
            <person name="Jones A.D."/>
            <person name="Pegg A.E."/>
        </authorList>
    </citation>
    <scope>NUCLEOTIDE SEQUENCE [MRNA]</scope>
    <scope>FUNCTION</scope>
    <scope>CATALYTIC ACTIVITY</scope>
    <scope>BIOPHYSICOCHEMICAL PROPERTIES</scope>
    <scope>TISSUE SPECIFICITY</scope>
</reference>
<reference key="2">
    <citation type="journal article" date="2004" name="Genome Res.">
        <title>The status, quality, and expansion of the NIH full-length cDNA project: the Mammalian Gene Collection (MGC).</title>
        <authorList>
            <consortium name="The MGC Project Team"/>
        </authorList>
    </citation>
    <scope>NUCLEOTIDE SEQUENCE [LARGE SCALE MRNA]</scope>
    <source>
        <tissue>Lung</tissue>
    </source>
</reference>
<reference key="3">
    <citation type="journal article" date="2003" name="Biochem. J.">
        <title>Genomic identification and biochemical characterization of a second spermidine/spermine N1-acetyltransferase.</title>
        <authorList>
            <person name="Chen Y."/>
            <person name="Vujcic S."/>
            <person name="Liang P."/>
            <person name="Diegelman P."/>
            <person name="Kramer D.L."/>
            <person name="Porter C.W."/>
        </authorList>
    </citation>
    <scope>FUNCTION</scope>
    <scope>CATALYTIC ACTIVITY</scope>
    <scope>SUBCELLULAR LOCATION</scope>
    <scope>TISSUE SPECIFICITY</scope>
    <scope>INDUCTION</scope>
    <source>
        <tissue>Lung carcinoma</tissue>
    </source>
</reference>
<reference key="4">
    <citation type="journal article" date="2009" name="Science">
        <title>Lysine acetylation targets protein complexes and co-regulates major cellular functions.</title>
        <authorList>
            <person name="Choudhary C."/>
            <person name="Kumar C."/>
            <person name="Gnad F."/>
            <person name="Nielsen M.L."/>
            <person name="Rehman M."/>
            <person name="Walther T.C."/>
            <person name="Olsen J.V."/>
            <person name="Mann M."/>
        </authorList>
    </citation>
    <scope>ACETYLATION [LARGE SCALE ANALYSIS] AT LYS-29</scope>
    <scope>IDENTIFICATION BY MASS SPECTROMETRY [LARGE SCALE ANALYSIS]</scope>
</reference>
<reference key="5">
    <citation type="journal article" date="2014" name="J. Proteomics">
        <title>An enzyme assisted RP-RPLC approach for in-depth analysis of human liver phosphoproteome.</title>
        <authorList>
            <person name="Bian Y."/>
            <person name="Song C."/>
            <person name="Cheng K."/>
            <person name="Dong M."/>
            <person name="Wang F."/>
            <person name="Huang J."/>
            <person name="Sun D."/>
            <person name="Wang L."/>
            <person name="Ye M."/>
            <person name="Zou H."/>
        </authorList>
    </citation>
    <scope>IDENTIFICATION BY MASS SPECTROMETRY [LARGE SCALE ANALYSIS]</scope>
    <source>
        <tissue>Liver</tissue>
    </source>
</reference>
<reference key="6">
    <citation type="journal article" date="2006" name="Proteins">
        <title>Crystal structure of Homo sapiens thialysine Nepsilon-acetyltransferase (HsSSAT2) in complex with acetyl coenzyme A.</title>
        <authorList>
            <person name="Han B.W."/>
            <person name="Bingman C.A."/>
            <person name="Wesenberg G.E."/>
            <person name="Phillips G.N. Jr."/>
        </authorList>
    </citation>
    <scope>X-RAY CRYSTALLOGRAPHY (1.84 ANGSTROMS) OF 2-170 IN COMPLEX WITH ACETYL-COA</scope>
    <scope>SUBUNIT</scope>
</reference>
<sequence>MASVRIREAKEGDCGDILRLIRELAEFEKLSDQVKISEEALRADGFGDNPFYHCLVAEILPAPGKLLGPCVVGYGIYYFIYSTWKGRTIYLEDIYVMPEYRGQGIGSKIIKKVAEVALDKGCSQFRLAVLDWNQRAMDLYKALGAQDLTEAEGWHFFCFQGEATRKLAGK</sequence>
<keyword id="KW-0002">3D-structure</keyword>
<keyword id="KW-0007">Acetylation</keyword>
<keyword id="KW-0012">Acyltransferase</keyword>
<keyword id="KW-0963">Cytoplasm</keyword>
<keyword id="KW-1267">Proteomics identification</keyword>
<keyword id="KW-1185">Reference proteome</keyword>
<keyword id="KW-0808">Transferase</keyword>
<accession>Q96F10</accession>